<comment type="function">
    <text evidence="3 18 19 20 21">Component of the 9-1-1 cell-cycle checkpoint response complex that plays a major role in DNA repair (PubMed:10713044, PubMed:17575048, PubMed:20545769, PubMed:21659603, PubMed:31135337). The 9-1-1 complex is recruited to DNA lesion upon damage by the RAD17-replication factor C (RFC) clamp loader complex (PubMed:21659603). Acts then as a sliding clamp platform on DNA for several proteins involved in long-patch base excision repair (LP-BER) (PubMed:21659603). The 9-1-1 complex stimulates DNA polymerase beta (POLB) activity by increasing its affinity for the 3'-OH end of the primer-template and stabilizes POLB to those sites where LP-BER proceeds; endonuclease FEN1 cleavage activity on substrates with double, nick, or gap flaps of distinct sequences and lengths; and DNA ligase I (LIG1) on long-patch base excision repair substrates (PubMed:21659603). The 9-1-1 complex is necessary for the recruitment of RHNO1 to sites of double-stranded breaks (DSB) occurring during the S phase (PubMed:21659603). RAD9A possesses 3'-&gt;5' double stranded DNA exonuclease activity (PubMed:10713044).</text>
</comment>
<comment type="catalytic activity">
    <reaction evidence="3">
        <text>Exonucleolytic cleavage in the 3'- to 5'-direction to yield nucleoside 5'-phosphates.</text>
        <dbReference type="EC" id="3.1.11.2"/>
    </reaction>
</comment>
<comment type="subunit">
    <text evidence="2 4 5 6 7 8 9 10 12 13 14 15 16 17 18 19 21">Component of the toroidal 9-1-1 (RAD9-RAD1-HUS1) complex, composed of RAD9A, RAD1 and HUS1 (PubMed:10359610, PubMed:10777662, PubMed:10846170, PubMed:10884395, PubMed:15314187, PubMed:15556996, PubMed:15871698, PubMed:15897895, PubMed:16216273, PubMed:17575048, PubMed:20545769, PubMed:31135337). The 9-1-1 complex associates with LIG1, POLB, FEN1, RAD17, HDAC1, RPA1 and RPA2 (PubMed:10884395, PubMed:15556996, PubMed:15871698, PubMed:15897895, PubMed:16216273). The 9-1-1 complex associates with the RAD17-RFC complex (PubMed:12578958). RAD9A interacts with BCL2L1, FEN1, RAD9B, ABL1, RPA1, ATAD5 and RPA2 (PubMed:11971963, PubMed:12628935, PubMed:14500360). Interacts with DNAJC7 (PubMed:11573955). Interacts (when phosphorylated) with TOPBP1 (PubMed:17575048, PubMed:20545769, PubMed:31135337).</text>
</comment>
<comment type="interaction">
    <interactant intactId="EBI-2606224">
        <id>Q99638</id>
    </interactant>
    <interactant intactId="EBI-1056174">
        <id>O60921</id>
        <label>HUS1</label>
    </interactant>
    <organismsDiffer>false</organismsDiffer>
    <experiments>17</experiments>
</comment>
<comment type="interaction">
    <interactant intactId="EBI-2606224">
        <id>Q99638</id>
    </interactant>
    <interactant intactId="EBI-721835">
        <id>O60671</id>
        <label>RAD1</label>
    </interactant>
    <organismsDiffer>false</organismsDiffer>
    <experiments>5</experiments>
</comment>
<comment type="interaction">
    <interactant intactId="EBI-2606224">
        <id>Q99638</id>
    </interactant>
    <interactant intactId="EBI-968231">
        <id>O75943</id>
        <label>RAD17</label>
    </interactant>
    <organismsDiffer>false</organismsDiffer>
    <experiments>2</experiments>
</comment>
<comment type="subcellular location">
    <subcellularLocation>
        <location evidence="10">Nucleus</location>
    </subcellularLocation>
</comment>
<comment type="PTM">
    <text evidence="8 10 11 18 19">Constitutively phosphorylated on serine and threonine amino acids in absence of DNA damage (PubMed:12628935). Hyperphosphorylated by PRKCD and ABL1 upon DNA damage (PubMed:11971963, PubMed:12709442). Its phosphorylation by PRKCD may be required for the formation of the 9-1-1 complex (PubMed:12628935). Phosphorylated at Ser-341 and Ser-387 by CK2, promoting interaction with TOPBP1 (PubMed:17575048, PubMed:20545769).</text>
</comment>
<comment type="similarity">
    <text evidence="23">Belongs to the rad9 family.</text>
</comment>
<comment type="online information" name="Atlas of Genetics and Cytogenetics in Oncology and Haematology">
    <link uri="https://atlasgeneticsoncology.org/gene/42031/RAD9A"/>
</comment>
<dbReference type="EC" id="3.1.11.2" evidence="3"/>
<dbReference type="EMBL" id="U53174">
    <property type="protein sequence ID" value="AAB39928.1"/>
    <property type="molecule type" value="mRNA"/>
</dbReference>
<dbReference type="EMBL" id="CR536508">
    <property type="protein sequence ID" value="CAG38746.1"/>
    <property type="molecule type" value="mRNA"/>
</dbReference>
<dbReference type="EMBL" id="AY766122">
    <property type="protein sequence ID" value="AAU89725.1"/>
    <property type="molecule type" value="Genomic_DNA"/>
</dbReference>
<dbReference type="EMBL" id="AK315348">
    <property type="protein sequence ID" value="BAG37745.1"/>
    <property type="molecule type" value="mRNA"/>
</dbReference>
<dbReference type="EMBL" id="CH471076">
    <property type="protein sequence ID" value="EAW74605.1"/>
    <property type="molecule type" value="Genomic_DNA"/>
</dbReference>
<dbReference type="EMBL" id="BC014848">
    <property type="protein sequence ID" value="AAH14848.1"/>
    <property type="molecule type" value="mRNA"/>
</dbReference>
<dbReference type="CCDS" id="CCDS8159.1"/>
<dbReference type="RefSeq" id="NP_001230153.1">
    <property type="nucleotide sequence ID" value="NM_001243224.1"/>
</dbReference>
<dbReference type="RefSeq" id="NP_004575.1">
    <property type="nucleotide sequence ID" value="NM_004584.3"/>
</dbReference>
<dbReference type="PDB" id="3A1J">
    <property type="method" value="X-ray"/>
    <property type="resolution" value="2.50 A"/>
    <property type="chains" value="A=1-266"/>
</dbReference>
<dbReference type="PDB" id="3G65">
    <property type="method" value="X-ray"/>
    <property type="resolution" value="2.90 A"/>
    <property type="chains" value="A=1-270"/>
</dbReference>
<dbReference type="PDB" id="3GGR">
    <property type="method" value="X-ray"/>
    <property type="resolution" value="3.20 A"/>
    <property type="chains" value="A=1-270"/>
</dbReference>
<dbReference type="PDB" id="6HM5">
    <property type="method" value="X-ray"/>
    <property type="resolution" value="2.33 A"/>
    <property type="chains" value="B=380-390"/>
</dbReference>
<dbReference type="PDB" id="6J8Y">
    <property type="method" value="X-ray"/>
    <property type="resolution" value="2.40 A"/>
    <property type="chains" value="A=1-270"/>
</dbReference>
<dbReference type="PDB" id="7Z6H">
    <property type="method" value="EM"/>
    <property type="resolution" value="3.59 A"/>
    <property type="chains" value="A=1-391"/>
</dbReference>
<dbReference type="PDB" id="8GNN">
    <property type="method" value="X-ray"/>
    <property type="resolution" value="2.12 A"/>
    <property type="chains" value="A=1-270"/>
</dbReference>
<dbReference type="PDB" id="8JZY">
    <property type="method" value="X-ray"/>
    <property type="resolution" value="1.50 A"/>
    <property type="chains" value="B=296-314"/>
</dbReference>
<dbReference type="PDB" id="8WU8">
    <property type="method" value="X-ray"/>
    <property type="resolution" value="2.81 A"/>
    <property type="chains" value="A=1-270"/>
</dbReference>
<dbReference type="PDBsum" id="3A1J"/>
<dbReference type="PDBsum" id="3G65"/>
<dbReference type="PDBsum" id="3GGR"/>
<dbReference type="PDBsum" id="6HM5"/>
<dbReference type="PDBsum" id="6J8Y"/>
<dbReference type="PDBsum" id="7Z6H"/>
<dbReference type="PDBsum" id="8GNN"/>
<dbReference type="PDBsum" id="8JZY"/>
<dbReference type="PDBsum" id="8WU8"/>
<dbReference type="EMDB" id="EMD-14527"/>
<dbReference type="SMR" id="Q99638"/>
<dbReference type="BioGRID" id="111820">
    <property type="interactions" value="74"/>
</dbReference>
<dbReference type="ComplexPortal" id="CPX-1829">
    <property type="entry name" value="Checkpoint clamp complex"/>
</dbReference>
<dbReference type="CORUM" id="Q99638"/>
<dbReference type="DIP" id="DIP-24255N"/>
<dbReference type="DIP" id="DIP-40930N"/>
<dbReference type="FunCoup" id="Q99638">
    <property type="interactions" value="3017"/>
</dbReference>
<dbReference type="IntAct" id="Q99638">
    <property type="interactions" value="15"/>
</dbReference>
<dbReference type="MINT" id="Q99638"/>
<dbReference type="STRING" id="9606.ENSP00000311360"/>
<dbReference type="GlyGen" id="Q99638">
    <property type="glycosylation" value="2 sites, 1 O-linked glycan (1 site)"/>
</dbReference>
<dbReference type="iPTMnet" id="Q99638"/>
<dbReference type="PhosphoSitePlus" id="Q99638"/>
<dbReference type="BioMuta" id="RAD9A"/>
<dbReference type="DMDM" id="74717382"/>
<dbReference type="CPTAC" id="CPTAC-5930"/>
<dbReference type="CPTAC" id="CPTAC-5931"/>
<dbReference type="jPOST" id="Q99638"/>
<dbReference type="MassIVE" id="Q99638"/>
<dbReference type="PaxDb" id="9606-ENSP00000311360"/>
<dbReference type="PeptideAtlas" id="Q99638"/>
<dbReference type="ProteomicsDB" id="78371"/>
<dbReference type="Pumba" id="Q99638"/>
<dbReference type="Antibodypedia" id="1880">
    <property type="antibodies" value="1134 antibodies from 37 providers"/>
</dbReference>
<dbReference type="CPTC" id="Q99638">
    <property type="antibodies" value="1 antibody"/>
</dbReference>
<dbReference type="DNASU" id="5883"/>
<dbReference type="Ensembl" id="ENST00000307980.7">
    <property type="protein sequence ID" value="ENSP00000311360.2"/>
    <property type="gene ID" value="ENSG00000172613.8"/>
</dbReference>
<dbReference type="GeneID" id="5883"/>
<dbReference type="KEGG" id="hsa:5883"/>
<dbReference type="MANE-Select" id="ENST00000307980.7">
    <property type="protein sequence ID" value="ENSP00000311360.2"/>
    <property type="RefSeq nucleotide sequence ID" value="NM_004584.3"/>
    <property type="RefSeq protein sequence ID" value="NP_004575.1"/>
</dbReference>
<dbReference type="UCSC" id="uc001okr.4">
    <property type="organism name" value="human"/>
</dbReference>
<dbReference type="AGR" id="HGNC:9827"/>
<dbReference type="CTD" id="5883"/>
<dbReference type="DisGeNET" id="5883"/>
<dbReference type="GeneCards" id="RAD9A"/>
<dbReference type="HGNC" id="HGNC:9827">
    <property type="gene designation" value="RAD9A"/>
</dbReference>
<dbReference type="HPA" id="ENSG00000172613">
    <property type="expression patterns" value="Low tissue specificity"/>
</dbReference>
<dbReference type="MIM" id="603761">
    <property type="type" value="gene"/>
</dbReference>
<dbReference type="neXtProt" id="NX_Q99638"/>
<dbReference type="OpenTargets" id="ENSG00000172613"/>
<dbReference type="PharmGKB" id="PA294"/>
<dbReference type="VEuPathDB" id="HostDB:ENSG00000172613"/>
<dbReference type="eggNOG" id="KOG2810">
    <property type="taxonomic scope" value="Eukaryota"/>
</dbReference>
<dbReference type="GeneTree" id="ENSGT00390000005767"/>
<dbReference type="InParanoid" id="Q99638"/>
<dbReference type="OMA" id="NETQCRF"/>
<dbReference type="OrthoDB" id="60092at2759"/>
<dbReference type="PAN-GO" id="Q99638">
    <property type="GO annotations" value="5 GO annotations based on evolutionary models"/>
</dbReference>
<dbReference type="PhylomeDB" id="Q99638"/>
<dbReference type="TreeFam" id="TF101212"/>
<dbReference type="PathwayCommons" id="Q99638"/>
<dbReference type="Reactome" id="R-HSA-176187">
    <property type="pathway name" value="Activation of ATR in response to replication stress"/>
</dbReference>
<dbReference type="Reactome" id="R-HSA-5685938">
    <property type="pathway name" value="HDR through Single Strand Annealing (SSA)"/>
</dbReference>
<dbReference type="Reactome" id="R-HSA-5693607">
    <property type="pathway name" value="Processing of DNA double-strand break ends"/>
</dbReference>
<dbReference type="Reactome" id="R-HSA-5693616">
    <property type="pathway name" value="Presynaptic phase of homologous DNA pairing and strand exchange"/>
</dbReference>
<dbReference type="Reactome" id="R-HSA-6804756">
    <property type="pathway name" value="Regulation of TP53 Activity through Phosphorylation"/>
</dbReference>
<dbReference type="Reactome" id="R-HSA-69473">
    <property type="pathway name" value="G2/M DNA damage checkpoint"/>
</dbReference>
<dbReference type="Reactome" id="R-HSA-9709570">
    <property type="pathway name" value="Impaired BRCA2 binding to RAD51"/>
</dbReference>
<dbReference type="SignaLink" id="Q99638"/>
<dbReference type="SIGNOR" id="Q99638"/>
<dbReference type="BioGRID-ORCS" id="5883">
    <property type="hits" value="599 hits in 1164 CRISPR screens"/>
</dbReference>
<dbReference type="CD-CODE" id="D3B9EAFD">
    <property type="entry name" value="Synthetic Condensate 000362"/>
</dbReference>
<dbReference type="ChiTaRS" id="RAD9A">
    <property type="organism name" value="human"/>
</dbReference>
<dbReference type="EvolutionaryTrace" id="Q99638"/>
<dbReference type="GeneWiki" id="RAD9A"/>
<dbReference type="GenomeRNAi" id="5883"/>
<dbReference type="Pharos" id="Q99638">
    <property type="development level" value="Tbio"/>
</dbReference>
<dbReference type="PRO" id="PR:Q99638"/>
<dbReference type="Proteomes" id="UP000005640">
    <property type="component" value="Chromosome 11"/>
</dbReference>
<dbReference type="RNAct" id="Q99638">
    <property type="molecule type" value="protein"/>
</dbReference>
<dbReference type="Bgee" id="ENSG00000172613">
    <property type="expression patterns" value="Expressed in right uterine tube and 135 other cell types or tissues"/>
</dbReference>
<dbReference type="ExpressionAtlas" id="Q99638">
    <property type="expression patterns" value="baseline and differential"/>
</dbReference>
<dbReference type="GO" id="GO:0030896">
    <property type="term" value="C:checkpoint clamp complex"/>
    <property type="evidence" value="ECO:0000314"/>
    <property type="project" value="UniProtKB"/>
</dbReference>
<dbReference type="GO" id="GO:0005737">
    <property type="term" value="C:cytoplasm"/>
    <property type="evidence" value="ECO:0007669"/>
    <property type="project" value="Ensembl"/>
</dbReference>
<dbReference type="GO" id="GO:0005654">
    <property type="term" value="C:nucleoplasm"/>
    <property type="evidence" value="ECO:0000314"/>
    <property type="project" value="HPA"/>
</dbReference>
<dbReference type="GO" id="GO:0005634">
    <property type="term" value="C:nucleus"/>
    <property type="evidence" value="ECO:0000314"/>
    <property type="project" value="UniProtKB"/>
</dbReference>
<dbReference type="GO" id="GO:0008408">
    <property type="term" value="F:3'-5' exonuclease activity"/>
    <property type="evidence" value="ECO:0000314"/>
    <property type="project" value="UniProtKB"/>
</dbReference>
<dbReference type="GO" id="GO:0008311">
    <property type="term" value="F:double-stranded DNA 3'-5' DNA exonuclease activity"/>
    <property type="evidence" value="ECO:0007669"/>
    <property type="project" value="UniProtKB-EC"/>
</dbReference>
<dbReference type="GO" id="GO:0019899">
    <property type="term" value="F:enzyme binding"/>
    <property type="evidence" value="ECO:0000353"/>
    <property type="project" value="UniProtKB"/>
</dbReference>
<dbReference type="GO" id="GO:0042826">
    <property type="term" value="F:histone deacetylase binding"/>
    <property type="evidence" value="ECO:0000353"/>
    <property type="project" value="UniProtKB"/>
</dbReference>
<dbReference type="GO" id="GO:0019901">
    <property type="term" value="F:protein kinase binding"/>
    <property type="evidence" value="ECO:0000353"/>
    <property type="project" value="UniProtKB"/>
</dbReference>
<dbReference type="GO" id="GO:0017124">
    <property type="term" value="F:SH3 domain binding"/>
    <property type="evidence" value="ECO:0000353"/>
    <property type="project" value="UniProtKB"/>
</dbReference>
<dbReference type="GO" id="GO:0071479">
    <property type="term" value="P:cellular response to ionizing radiation"/>
    <property type="evidence" value="ECO:0000314"/>
    <property type="project" value="UniProtKB"/>
</dbReference>
<dbReference type="GO" id="GO:0000077">
    <property type="term" value="P:DNA damage checkpoint signaling"/>
    <property type="evidence" value="ECO:0000315"/>
    <property type="project" value="UniProtKB"/>
</dbReference>
<dbReference type="GO" id="GO:0006974">
    <property type="term" value="P:DNA damage response"/>
    <property type="evidence" value="ECO:0000314"/>
    <property type="project" value="UniProtKB"/>
</dbReference>
<dbReference type="GO" id="GO:0006281">
    <property type="term" value="P:DNA repair"/>
    <property type="evidence" value="ECO:0000318"/>
    <property type="project" value="GO_Central"/>
</dbReference>
<dbReference type="GO" id="GO:0000076">
    <property type="term" value="P:DNA replication checkpoint signaling"/>
    <property type="evidence" value="ECO:0000318"/>
    <property type="project" value="GO_Central"/>
</dbReference>
<dbReference type="GO" id="GO:0008630">
    <property type="term" value="P:intrinsic apoptotic signaling pathway in response to DNA damage"/>
    <property type="evidence" value="ECO:0007669"/>
    <property type="project" value="Ensembl"/>
</dbReference>
<dbReference type="GO" id="GO:0031573">
    <property type="term" value="P:mitotic intra-S DNA damage checkpoint signaling"/>
    <property type="evidence" value="ECO:0000318"/>
    <property type="project" value="GO_Central"/>
</dbReference>
<dbReference type="GO" id="GO:1902231">
    <property type="term" value="P:positive regulation of intrinsic apoptotic signaling pathway in response to DNA damage"/>
    <property type="evidence" value="ECO:0007669"/>
    <property type="project" value="Ensembl"/>
</dbReference>
<dbReference type="CDD" id="cd00577">
    <property type="entry name" value="PCNA"/>
    <property type="match status" value="1"/>
</dbReference>
<dbReference type="FunFam" id="3.70.10.10:FF:000005">
    <property type="entry name" value="Cell cycle checkpoint control protein"/>
    <property type="match status" value="1"/>
</dbReference>
<dbReference type="Gene3D" id="3.70.10.10">
    <property type="match status" value="1"/>
</dbReference>
<dbReference type="InterPro" id="IPR046938">
    <property type="entry name" value="DNA_clamp_sf"/>
</dbReference>
<dbReference type="InterPro" id="IPR026584">
    <property type="entry name" value="Rad9"/>
</dbReference>
<dbReference type="InterPro" id="IPR007268">
    <property type="entry name" value="Rad9/Ddc1"/>
</dbReference>
<dbReference type="PANTHER" id="PTHR15237:SF1">
    <property type="entry name" value="CELL CYCLE CHECKPOINT CONTROL PROTEIN RAD9A"/>
    <property type="match status" value="1"/>
</dbReference>
<dbReference type="PANTHER" id="PTHR15237">
    <property type="entry name" value="DNA REPAIR PROTEIN RAD9"/>
    <property type="match status" value="1"/>
</dbReference>
<dbReference type="Pfam" id="PF04139">
    <property type="entry name" value="Rad9"/>
    <property type="match status" value="1"/>
</dbReference>
<dbReference type="PIRSF" id="PIRSF009303">
    <property type="entry name" value="Cell_cycle_RAD9"/>
    <property type="match status" value="1"/>
</dbReference>
<dbReference type="SUPFAM" id="SSF55979">
    <property type="entry name" value="DNA clamp"/>
    <property type="match status" value="1"/>
</dbReference>
<sequence>MKCLVTGGNVKVLGKAVHSLSRIGDELYLEPLEDGLSLRTVNSSRSAYACFLFAPLFFQQYQAATPGQDLLRCKILMKSFLSVFRSLAMLEKTVEKCCISLNGRSSRLVVQLHCKFGVRKTHNLSFQDCESLQAVFDPASCPHMLRAPARVLGEAVLPFSPALAEVTLGIGRGRRVILRSYHEEEADSTAKAMVTEMCLGEEDFQQLQAQEGVAITFCLKEFRGLLSFAESANLNLSIHFDAPGRPAIFTIKDSLLDGHFVLATLSDTDSHSQDLGSPERHQPVPQLQAHSTPHPDDFANDDIDSYMIAMETTIGNEGSRVLPSISLSPGPQPPKSPGPHSEEEDEAEPSTVPGTPPPKKFRSLFFGSILAPVRSPQGPSPVLAEDSEGEG</sequence>
<evidence type="ECO:0000256" key="1">
    <source>
        <dbReference type="SAM" id="MobiDB-lite"/>
    </source>
</evidence>
<evidence type="ECO:0000269" key="2">
    <source>
    </source>
</evidence>
<evidence type="ECO:0000269" key="3">
    <source>
    </source>
</evidence>
<evidence type="ECO:0000269" key="4">
    <source>
    </source>
</evidence>
<evidence type="ECO:0000269" key="5">
    <source>
    </source>
</evidence>
<evidence type="ECO:0000269" key="6">
    <source>
    </source>
</evidence>
<evidence type="ECO:0000269" key="7">
    <source>
    </source>
</evidence>
<evidence type="ECO:0000269" key="8">
    <source>
    </source>
</evidence>
<evidence type="ECO:0000269" key="9">
    <source>
    </source>
</evidence>
<evidence type="ECO:0000269" key="10">
    <source>
    </source>
</evidence>
<evidence type="ECO:0000269" key="11">
    <source>
    </source>
</evidence>
<evidence type="ECO:0000269" key="12">
    <source>
    </source>
</evidence>
<evidence type="ECO:0000269" key="13">
    <source>
    </source>
</evidence>
<evidence type="ECO:0000269" key="14">
    <source>
    </source>
</evidence>
<evidence type="ECO:0000269" key="15">
    <source>
    </source>
</evidence>
<evidence type="ECO:0000269" key="16">
    <source>
    </source>
</evidence>
<evidence type="ECO:0000269" key="17">
    <source>
    </source>
</evidence>
<evidence type="ECO:0000269" key="18">
    <source>
    </source>
</evidence>
<evidence type="ECO:0000269" key="19">
    <source>
    </source>
</evidence>
<evidence type="ECO:0000269" key="20">
    <source>
    </source>
</evidence>
<evidence type="ECO:0000269" key="21">
    <source>
    </source>
</evidence>
<evidence type="ECO:0000269" key="22">
    <source ref="3"/>
</evidence>
<evidence type="ECO:0000305" key="23"/>
<evidence type="ECO:0007744" key="24">
    <source>
        <dbReference type="PDB" id="6J8Y"/>
    </source>
</evidence>
<evidence type="ECO:0007744" key="25">
    <source>
        <dbReference type="PDB" id="8GNN"/>
    </source>
</evidence>
<evidence type="ECO:0007744" key="26">
    <source>
    </source>
</evidence>
<evidence type="ECO:0007744" key="27">
    <source>
    </source>
</evidence>
<evidence type="ECO:0007744" key="28">
    <source>
    </source>
</evidence>
<evidence type="ECO:0007744" key="29">
    <source>
    </source>
</evidence>
<evidence type="ECO:0007744" key="30">
    <source>
    </source>
</evidence>
<evidence type="ECO:0007744" key="31">
    <source>
    </source>
</evidence>
<evidence type="ECO:0007829" key="32">
    <source>
        <dbReference type="PDB" id="3A1J"/>
    </source>
</evidence>
<evidence type="ECO:0007829" key="33">
    <source>
        <dbReference type="PDB" id="3G65"/>
    </source>
</evidence>
<evidence type="ECO:0007829" key="34">
    <source>
        <dbReference type="PDB" id="3GGR"/>
    </source>
</evidence>
<evidence type="ECO:0007829" key="35">
    <source>
        <dbReference type="PDB" id="6HM5"/>
    </source>
</evidence>
<evidence type="ECO:0007829" key="36">
    <source>
        <dbReference type="PDB" id="6J8Y"/>
    </source>
</evidence>
<evidence type="ECO:0007829" key="37">
    <source>
        <dbReference type="PDB" id="8GNN"/>
    </source>
</evidence>
<evidence type="ECO:0007829" key="38">
    <source>
        <dbReference type="PDB" id="8JZY"/>
    </source>
</evidence>
<keyword id="KW-0002">3D-structure</keyword>
<keyword id="KW-0903">Direct protein sequencing</keyword>
<keyword id="KW-0227">DNA damage</keyword>
<keyword id="KW-0269">Exonuclease</keyword>
<keyword id="KW-0378">Hydrolase</keyword>
<keyword id="KW-0540">Nuclease</keyword>
<keyword id="KW-0539">Nucleus</keyword>
<keyword id="KW-0597">Phosphoprotein</keyword>
<keyword id="KW-1267">Proteomics identification</keyword>
<keyword id="KW-1185">Reference proteome</keyword>
<name>RAD9A_HUMAN</name>
<accession>Q99638</accession>
<accession>B2RCZ8</accession>
<accession>Q6FI29</accession>
<accession>Q96C41</accession>
<protein>
    <recommendedName>
        <fullName>Cell cycle checkpoint control protein RAD9A</fullName>
        <shortName>hRAD9</shortName>
        <ecNumber evidence="3">3.1.11.2</ecNumber>
    </recommendedName>
    <alternativeName>
        <fullName>DNA repair exonuclease rad9 homolog A</fullName>
    </alternativeName>
</protein>
<feature type="chain" id="PRO_0000225000" description="Cell cycle checkpoint control protein RAD9A">
    <location>
        <begin position="1"/>
        <end position="391"/>
    </location>
</feature>
<feature type="region of interest" description="Possesses 3'-5' exonuclease activity">
    <location>
        <begin position="51"/>
        <end position="91"/>
    </location>
</feature>
<feature type="region of interest" description="Sufficient for interaction with ABL1" evidence="8">
    <location>
        <begin position="266"/>
        <end position="391"/>
    </location>
</feature>
<feature type="region of interest" description="Disordered" evidence="1">
    <location>
        <begin position="268"/>
        <end position="301"/>
    </location>
</feature>
<feature type="region of interest" description="Disordered" evidence="1">
    <location>
        <begin position="319"/>
        <end position="391"/>
    </location>
</feature>
<feature type="compositionally biased region" description="Basic and acidic residues" evidence="1">
    <location>
        <begin position="268"/>
        <end position="282"/>
    </location>
</feature>
<feature type="modified residue" description="Phosphotyrosine" evidence="8">
    <location>
        <position position="28"/>
    </location>
</feature>
<feature type="modified residue" description="Phosphoserine" evidence="11">
    <location>
        <position position="272"/>
    </location>
</feature>
<feature type="modified residue" description="Phosphoserine" evidence="11 27 28 29">
    <location>
        <position position="277"/>
    </location>
</feature>
<feature type="modified residue" description="Phosphoserine" evidence="11 31">
    <location>
        <position position="328"/>
    </location>
</feature>
<feature type="modified residue" description="Phosphoserine; by CK2" evidence="11 19">
    <location>
        <position position="341"/>
    </location>
</feature>
<feature type="modified residue" description="Phosphoserine" evidence="11 26 28 29">
    <location>
        <position position="375"/>
    </location>
</feature>
<feature type="modified residue" description="Phosphoserine" evidence="11 26">
    <location>
        <position position="380"/>
    </location>
</feature>
<feature type="modified residue" description="Phosphoserine; by CK2" evidence="11 18 19 26 27 28 29 30 31">
    <location>
        <position position="387"/>
    </location>
</feature>
<feature type="sequence variant" id="VAR_025410" description="In dbSNP:rs11575913." evidence="22">
    <original>C</original>
    <variation>F</variation>
    <location>
        <position position="3"/>
    </location>
</feature>
<feature type="sequence variant" id="VAR_051724" description="In dbSNP:rs2422490.">
    <original>L</original>
    <variation>Q</variation>
    <location>
        <position position="71"/>
    </location>
</feature>
<feature type="sequence variant" id="VAR_025411" description="In dbSNP:rs2066492." evidence="22">
    <original>S</original>
    <variation>A</variation>
    <location>
        <position position="100"/>
    </location>
</feature>
<feature type="sequence variant" id="VAR_025412" description="In dbSNP:rs17880039." evidence="22">
    <original>H</original>
    <variation>R</variation>
    <location>
        <position position="239"/>
    </location>
</feature>
<feature type="sequence variant" id="VAR_025413" description="In dbSNP:rs17882466." evidence="22">
    <original>M</original>
    <variation>T</variation>
    <location>
        <position position="307"/>
    </location>
</feature>
<feature type="mutagenesis site" description="Abolishes phosphorylation by ABL1." evidence="8">
    <original>Y</original>
    <variation>F</variation>
    <location>
        <position position="28"/>
    </location>
</feature>
<feature type="mutagenesis site" description="Complete loss of phosphorylation and no loss of interaction with the 9-1-1 complex; when associated with A-277; A-328; A-341; A-375; A-380 and A-387." evidence="11">
    <original>S</original>
    <variation>A</variation>
    <location>
        <position position="272"/>
    </location>
</feature>
<feature type="mutagenesis site" description="Complete loss of phosphorylation and no loss of interaction with the 9-1-1 complex; when associated with A-272; A-328; A-341; A-375; A-380 and A-387." evidence="11">
    <original>S</original>
    <variation>A</variation>
    <location>
        <position position="277"/>
    </location>
</feature>
<feature type="mutagenesis site" description="Complete loss of phosphorylation and no loss of interaction with the 9-1-1 complex; when associated with A-272; A-277; A-341; A-375; A-380 and A-387." evidence="11">
    <original>S</original>
    <variation>A</variation>
    <location>
        <position position="328"/>
    </location>
</feature>
<feature type="mutagenesis site" description="Complete loss of phosphorylation and no loss of interaction with the 9-1-1 complex; when associated with A-272; A-277; A-328; A-375; A-380 and A-387. Abolished phosphorylation by CK2, preventing interaction with TOPBP1; when associated with A-387." evidence="11 19">
    <original>S</original>
    <variation>A</variation>
    <location>
        <position position="341"/>
    </location>
</feature>
<feature type="mutagenesis site" description="Mimics phosphorylation, leading to weak but significant interaction with TOPBP1; when associated with E-387." evidence="19">
    <original>S</original>
    <variation>E</variation>
    <location>
        <position position="341"/>
    </location>
</feature>
<feature type="mutagenesis site" description="Complete loss of phosphorylation and no loss of interaction with the 9-1-1 complex; when associated with A-272; A-277; A-328; A-341; A-380 and A-387." evidence="11">
    <original>S</original>
    <variation>A</variation>
    <location>
        <position position="375"/>
    </location>
</feature>
<feature type="mutagenesis site" description="Complete loss of phosphorylation and no loss of interaction with the 9-1-1 complex; when associated with A-272; A-277; A-328; A-341; A-375 and A-387." evidence="11">
    <original>S</original>
    <variation>A</variation>
    <location>
        <position position="380"/>
    </location>
</feature>
<feature type="mutagenesis site" description="Complete loss of phosphorylation and no loss of interaction with the 9-1-1 complex; when associated with A-272; A-277; A-328; A-341; A-375 and A-380. Abolished phosphorylation by CK2, preventing interaction with TOPBP1; when associated with A-341." evidence="11 19">
    <original>S</original>
    <variation>A</variation>
    <location>
        <position position="387"/>
    </location>
</feature>
<feature type="mutagenesis site" description="Mimics phosphorylation, leading to weak but significant interaction with TOPBP1; when associated with E-341." evidence="19">
    <original>S</original>
    <variation>E</variation>
    <location>
        <position position="387"/>
    </location>
</feature>
<feature type="sequence conflict" description="In Ref. 2; CAG38746." evidence="23" ref="2">
    <original>V</original>
    <variation>A</variation>
    <location>
        <position position="12"/>
    </location>
</feature>
<feature type="sequence conflict" description="In Ref. 6; AAH14848." evidence="23" ref="6">
    <original>E</original>
    <variation>A</variation>
    <location>
        <position position="130"/>
    </location>
</feature>
<feature type="strand" evidence="37">
    <location>
        <begin position="2"/>
        <end position="6"/>
    </location>
</feature>
<feature type="helix" evidence="37">
    <location>
        <begin position="9"/>
        <end position="21"/>
    </location>
</feature>
<feature type="strand" evidence="37">
    <location>
        <begin position="25"/>
        <end position="32"/>
    </location>
</feature>
<feature type="strand" evidence="37">
    <location>
        <begin position="35"/>
        <end position="41"/>
    </location>
</feature>
<feature type="strand" evidence="36">
    <location>
        <begin position="43"/>
        <end position="45"/>
    </location>
</feature>
<feature type="strand" evidence="37">
    <location>
        <begin position="47"/>
        <end position="53"/>
    </location>
</feature>
<feature type="helix" evidence="37">
    <location>
        <begin position="55"/>
        <end position="57"/>
    </location>
</feature>
<feature type="strand" evidence="37">
    <location>
        <begin position="58"/>
        <end position="62"/>
    </location>
</feature>
<feature type="strand" evidence="32">
    <location>
        <begin position="66"/>
        <end position="68"/>
    </location>
</feature>
<feature type="strand" evidence="37">
    <location>
        <begin position="73"/>
        <end position="76"/>
    </location>
</feature>
<feature type="helix" evidence="37">
    <location>
        <begin position="77"/>
        <end position="83"/>
    </location>
</feature>
<feature type="helix" evidence="37">
    <location>
        <begin position="87"/>
        <end position="93"/>
    </location>
</feature>
<feature type="strand" evidence="37">
    <location>
        <begin position="94"/>
        <end position="101"/>
    </location>
</feature>
<feature type="strand" evidence="34">
    <location>
        <begin position="103"/>
        <end position="106"/>
    </location>
</feature>
<feature type="strand" evidence="37">
    <location>
        <begin position="107"/>
        <end position="114"/>
    </location>
</feature>
<feature type="helix" evidence="37">
    <location>
        <begin position="115"/>
        <end position="117"/>
    </location>
</feature>
<feature type="strand" evidence="37">
    <location>
        <begin position="119"/>
        <end position="124"/>
    </location>
</feature>
<feature type="helix" evidence="37">
    <location>
        <begin position="138"/>
        <end position="140"/>
    </location>
</feature>
<feature type="strand" evidence="37">
    <location>
        <begin position="142"/>
        <end position="148"/>
    </location>
</feature>
<feature type="helix" evidence="37">
    <location>
        <begin position="149"/>
        <end position="156"/>
    </location>
</feature>
<feature type="strand" evidence="37">
    <location>
        <begin position="165"/>
        <end position="171"/>
    </location>
</feature>
<feature type="turn" evidence="37">
    <location>
        <begin position="172"/>
        <end position="174"/>
    </location>
</feature>
<feature type="strand" evidence="37">
    <location>
        <begin position="175"/>
        <end position="180"/>
    </location>
</feature>
<feature type="strand" evidence="34">
    <location>
        <begin position="187"/>
        <end position="189"/>
    </location>
</feature>
<feature type="strand" evidence="37">
    <location>
        <begin position="194"/>
        <end position="199"/>
    </location>
</feature>
<feature type="helix" evidence="37">
    <location>
        <begin position="201"/>
        <end position="203"/>
    </location>
</feature>
<feature type="strand" evidence="37">
    <location>
        <begin position="205"/>
        <end position="208"/>
    </location>
</feature>
<feature type="strand" evidence="37">
    <location>
        <begin position="214"/>
        <end position="218"/>
    </location>
</feature>
<feature type="helix" evidence="37">
    <location>
        <begin position="219"/>
        <end position="231"/>
    </location>
</feature>
<feature type="strand" evidence="37">
    <location>
        <begin position="235"/>
        <end position="240"/>
    </location>
</feature>
<feature type="strand" evidence="34">
    <location>
        <begin position="241"/>
        <end position="245"/>
    </location>
</feature>
<feature type="strand" evidence="37">
    <location>
        <begin position="247"/>
        <end position="252"/>
    </location>
</feature>
<feature type="strand" evidence="37">
    <location>
        <begin position="254"/>
        <end position="262"/>
    </location>
</feature>
<feature type="strand" evidence="33">
    <location>
        <begin position="267"/>
        <end position="269"/>
    </location>
</feature>
<feature type="helix" evidence="38">
    <location>
        <begin position="303"/>
        <end position="309"/>
    </location>
</feature>
<feature type="strand" evidence="35">
    <location>
        <begin position="382"/>
        <end position="384"/>
    </location>
</feature>
<gene>
    <name type="primary">RAD9A</name>
</gene>
<reference key="1">
    <citation type="journal article" date="1996" name="Proc. Natl. Acad. Sci. U.S.A.">
        <title>A human homolog of the Schizosaccharomyces pombe rad9+ checkpoint control gene.</title>
        <authorList>
            <person name="Lieberman H.B."/>
            <person name="Hopkins K.M."/>
            <person name="Nass M."/>
            <person name="Demetrick D."/>
            <person name="Davey S."/>
        </authorList>
    </citation>
    <scope>NUCLEOTIDE SEQUENCE [MRNA]</scope>
</reference>
<reference key="2">
    <citation type="submission" date="2004-06" db="EMBL/GenBank/DDBJ databases">
        <title>Cloning of human full open reading frames in Gateway(TM) system entry vector (pDONR201).</title>
        <authorList>
            <person name="Ebert L."/>
            <person name="Schick M."/>
            <person name="Neubert P."/>
            <person name="Schatten R."/>
            <person name="Henze S."/>
            <person name="Korn B."/>
        </authorList>
    </citation>
    <scope>NUCLEOTIDE SEQUENCE [LARGE SCALE MRNA]</scope>
</reference>
<reference key="3">
    <citation type="submission" date="2004-09" db="EMBL/GenBank/DDBJ databases">
        <authorList>
            <consortium name="NIEHS SNPs program"/>
        </authorList>
    </citation>
    <scope>NUCLEOTIDE SEQUENCE [GENOMIC DNA]</scope>
    <scope>VARIANTS PHE-3; ALA-100; ARG-239 AND THR-307</scope>
</reference>
<reference key="4">
    <citation type="journal article" date="2004" name="Nat. Genet.">
        <title>Complete sequencing and characterization of 21,243 full-length human cDNAs.</title>
        <authorList>
            <person name="Ota T."/>
            <person name="Suzuki Y."/>
            <person name="Nishikawa T."/>
            <person name="Otsuki T."/>
            <person name="Sugiyama T."/>
            <person name="Irie R."/>
            <person name="Wakamatsu A."/>
            <person name="Hayashi K."/>
            <person name="Sato H."/>
            <person name="Nagai K."/>
            <person name="Kimura K."/>
            <person name="Makita H."/>
            <person name="Sekine M."/>
            <person name="Obayashi M."/>
            <person name="Nishi T."/>
            <person name="Shibahara T."/>
            <person name="Tanaka T."/>
            <person name="Ishii S."/>
            <person name="Yamamoto J."/>
            <person name="Saito K."/>
            <person name="Kawai Y."/>
            <person name="Isono Y."/>
            <person name="Nakamura Y."/>
            <person name="Nagahari K."/>
            <person name="Murakami K."/>
            <person name="Yasuda T."/>
            <person name="Iwayanagi T."/>
            <person name="Wagatsuma M."/>
            <person name="Shiratori A."/>
            <person name="Sudo H."/>
            <person name="Hosoiri T."/>
            <person name="Kaku Y."/>
            <person name="Kodaira H."/>
            <person name="Kondo H."/>
            <person name="Sugawara M."/>
            <person name="Takahashi M."/>
            <person name="Kanda K."/>
            <person name="Yokoi T."/>
            <person name="Furuya T."/>
            <person name="Kikkawa E."/>
            <person name="Omura Y."/>
            <person name="Abe K."/>
            <person name="Kamihara K."/>
            <person name="Katsuta N."/>
            <person name="Sato K."/>
            <person name="Tanikawa M."/>
            <person name="Yamazaki M."/>
            <person name="Ninomiya K."/>
            <person name="Ishibashi T."/>
            <person name="Yamashita H."/>
            <person name="Murakawa K."/>
            <person name="Fujimori K."/>
            <person name="Tanai H."/>
            <person name="Kimata M."/>
            <person name="Watanabe M."/>
            <person name="Hiraoka S."/>
            <person name="Chiba Y."/>
            <person name="Ishida S."/>
            <person name="Ono Y."/>
            <person name="Takiguchi S."/>
            <person name="Watanabe S."/>
            <person name="Yosida M."/>
            <person name="Hotuta T."/>
            <person name="Kusano J."/>
            <person name="Kanehori K."/>
            <person name="Takahashi-Fujii A."/>
            <person name="Hara H."/>
            <person name="Tanase T.-O."/>
            <person name="Nomura Y."/>
            <person name="Togiya S."/>
            <person name="Komai F."/>
            <person name="Hara R."/>
            <person name="Takeuchi K."/>
            <person name="Arita M."/>
            <person name="Imose N."/>
            <person name="Musashino K."/>
            <person name="Yuuki H."/>
            <person name="Oshima A."/>
            <person name="Sasaki N."/>
            <person name="Aotsuka S."/>
            <person name="Yoshikawa Y."/>
            <person name="Matsunawa H."/>
            <person name="Ichihara T."/>
            <person name="Shiohata N."/>
            <person name="Sano S."/>
            <person name="Moriya S."/>
            <person name="Momiyama H."/>
            <person name="Satoh N."/>
            <person name="Takami S."/>
            <person name="Terashima Y."/>
            <person name="Suzuki O."/>
            <person name="Nakagawa S."/>
            <person name="Senoh A."/>
            <person name="Mizoguchi H."/>
            <person name="Goto Y."/>
            <person name="Shimizu F."/>
            <person name="Wakebe H."/>
            <person name="Hishigaki H."/>
            <person name="Watanabe T."/>
            <person name="Sugiyama A."/>
            <person name="Takemoto M."/>
            <person name="Kawakami B."/>
            <person name="Yamazaki M."/>
            <person name="Watanabe K."/>
            <person name="Kumagai A."/>
            <person name="Itakura S."/>
            <person name="Fukuzumi Y."/>
            <person name="Fujimori Y."/>
            <person name="Komiyama M."/>
            <person name="Tashiro H."/>
            <person name="Tanigami A."/>
            <person name="Fujiwara T."/>
            <person name="Ono T."/>
            <person name="Yamada K."/>
            <person name="Fujii Y."/>
            <person name="Ozaki K."/>
            <person name="Hirao M."/>
            <person name="Ohmori Y."/>
            <person name="Kawabata A."/>
            <person name="Hikiji T."/>
            <person name="Kobatake N."/>
            <person name="Inagaki H."/>
            <person name="Ikema Y."/>
            <person name="Okamoto S."/>
            <person name="Okitani R."/>
            <person name="Kawakami T."/>
            <person name="Noguchi S."/>
            <person name="Itoh T."/>
            <person name="Shigeta K."/>
            <person name="Senba T."/>
            <person name="Matsumura K."/>
            <person name="Nakajima Y."/>
            <person name="Mizuno T."/>
            <person name="Morinaga M."/>
            <person name="Sasaki M."/>
            <person name="Togashi T."/>
            <person name="Oyama M."/>
            <person name="Hata H."/>
            <person name="Watanabe M."/>
            <person name="Komatsu T."/>
            <person name="Mizushima-Sugano J."/>
            <person name="Satoh T."/>
            <person name="Shirai Y."/>
            <person name="Takahashi Y."/>
            <person name="Nakagawa K."/>
            <person name="Okumura K."/>
            <person name="Nagase T."/>
            <person name="Nomura N."/>
            <person name="Kikuchi H."/>
            <person name="Masuho Y."/>
            <person name="Yamashita R."/>
            <person name="Nakai K."/>
            <person name="Yada T."/>
            <person name="Nakamura Y."/>
            <person name="Ohara O."/>
            <person name="Isogai T."/>
            <person name="Sugano S."/>
        </authorList>
    </citation>
    <scope>NUCLEOTIDE SEQUENCE [LARGE SCALE MRNA]</scope>
    <source>
        <tissue>Trachea</tissue>
    </source>
</reference>
<reference key="5">
    <citation type="submission" date="2005-07" db="EMBL/GenBank/DDBJ databases">
        <authorList>
            <person name="Mural R.J."/>
            <person name="Istrail S."/>
            <person name="Sutton G.G."/>
            <person name="Florea L."/>
            <person name="Halpern A.L."/>
            <person name="Mobarry C.M."/>
            <person name="Lippert R."/>
            <person name="Walenz B."/>
            <person name="Shatkay H."/>
            <person name="Dew I."/>
            <person name="Miller J.R."/>
            <person name="Flanigan M.J."/>
            <person name="Edwards N.J."/>
            <person name="Bolanos R."/>
            <person name="Fasulo D."/>
            <person name="Halldorsson B.V."/>
            <person name="Hannenhalli S."/>
            <person name="Turner R."/>
            <person name="Yooseph S."/>
            <person name="Lu F."/>
            <person name="Nusskern D.R."/>
            <person name="Shue B.C."/>
            <person name="Zheng X.H."/>
            <person name="Zhong F."/>
            <person name="Delcher A.L."/>
            <person name="Huson D.H."/>
            <person name="Kravitz S.A."/>
            <person name="Mouchard L."/>
            <person name="Reinert K."/>
            <person name="Remington K.A."/>
            <person name="Clark A.G."/>
            <person name="Waterman M.S."/>
            <person name="Eichler E.E."/>
            <person name="Adams M.D."/>
            <person name="Hunkapiller M.W."/>
            <person name="Myers E.W."/>
            <person name="Venter J.C."/>
        </authorList>
    </citation>
    <scope>NUCLEOTIDE SEQUENCE [LARGE SCALE GENOMIC DNA]</scope>
</reference>
<reference key="6">
    <citation type="journal article" date="2004" name="Genome Res.">
        <title>The status, quality, and expansion of the NIH full-length cDNA project: the Mammalian Gene Collection (MGC).</title>
        <authorList>
            <consortium name="The MGC Project Team"/>
        </authorList>
    </citation>
    <scope>NUCLEOTIDE SEQUENCE [LARGE SCALE MRNA]</scope>
    <source>
        <tissue>Testis</tissue>
    </source>
</reference>
<reference key="7">
    <citation type="journal article" date="2003" name="J. Biol. Chem.">
        <title>Phosphorylation of human Rad9 is required for genotoxin-activated checkpoint signaling.</title>
        <authorList>
            <person name="Roos-Mattjus P."/>
            <person name="Hopkins K.M."/>
            <person name="Oestreich A.J."/>
            <person name="Vroman B.T."/>
            <person name="Johnson K.L."/>
            <person name="Naylor S."/>
            <person name="Lieberman H.B."/>
            <person name="Karnitz L.M."/>
        </authorList>
    </citation>
    <scope>PROTEIN SEQUENCE OF 270-280; 326-329; 373-383 AND 385-390</scope>
    <scope>IDENTIFICATION BY MASS SPECTROMETRY</scope>
    <scope>PHOSPHORYLATION AT SER-272; SER-277; SER-328; SER-341; SER-375; SER-380 AND SER-387</scope>
    <scope>MUTAGENESIS OF SER-272; SER-277; SER-328; SER-341; SER-375; SER-380 AND SER-387</scope>
</reference>
<reference key="8">
    <citation type="journal article" date="1999" name="Mol. Biol. Cell">
        <title>The human G2 checkpoint control protein hRAD9 is a nuclear phosphoprotein that forms complexes with hRAD1 and hHUS1.</title>
        <authorList>
            <person name="St Onge R.P."/>
            <person name="Udell C.M."/>
            <person name="Casselman R."/>
            <person name="Davey S."/>
        </authorList>
    </citation>
    <scope>INTERACTION WITH HUS1 AND RAD1</scope>
</reference>
<reference key="9">
    <citation type="journal article" date="2000" name="Genomics">
        <title>Physical interaction among human checkpoint control proteins HUS1p, RAD1p, and RAD9p, and implications for the regulation of cell cycle progression.</title>
        <authorList>
            <person name="Hang H."/>
            <person name="Lieberman H.B."/>
        </authorList>
    </citation>
    <scope>INTERACTION WITH HUS1 AND RAD1</scope>
</reference>
<reference key="10">
    <citation type="journal article" date="2000" name="J. Biol. Chem.">
        <title>Human DNA damage checkpoint protein hRAD9 is a 3' to 5' exonuclease.</title>
        <authorList>
            <person name="Bessho T."/>
            <person name="Sancar A."/>
        </authorList>
    </citation>
    <scope>FUNCTION IN EXONUCLEASE ACTIVITY</scope>
    <scope>CATALYTIC ACTIVITY</scope>
</reference>
<reference key="11">
    <citation type="journal article" date="2000" name="J. Biol. Chem.">
        <title>HDAC1, a histone deacetylase, forms a complex with Hus1 and Rad9, two G2/M checkpoint Rad proteins.</title>
        <authorList>
            <person name="Cai R.L."/>
            <person name="Yan-Neale Y."/>
            <person name="Cueto M.A."/>
            <person name="Xu H."/>
            <person name="Cohen D."/>
        </authorList>
    </citation>
    <scope>IDENTIFICATION IN THE 9-1-1 COMPLEX ASSOCIATED WITH HDAC1</scope>
</reference>
<reference key="12">
    <citation type="journal article" date="2000" name="J. Biol. Chem.">
        <title>The human checkpoint protein hRad17 interacts with the PCNA-like proteins hRad1, hHus1, and hRad9.</title>
        <authorList>
            <person name="Rauen M."/>
            <person name="Burtelow M.A."/>
            <person name="Dufault V.M."/>
            <person name="Karnitz L.M."/>
        </authorList>
    </citation>
    <scope>IDENTIFICATION IN THE 9-1-1 COMPLEX ASSOCIATED WITH RAD17</scope>
</reference>
<reference key="13">
    <citation type="journal article" date="2001" name="Biochem. Biophys. Res. Commun.">
        <title>The J domain of Tpr2 regulates its interaction with the proapoptotic and cell-cycle checkpoint protein, Rad9.</title>
        <authorList>
            <person name="Xiang S.L."/>
            <person name="Kumano T."/>
            <person name="Iwasaki S.I."/>
            <person name="Sun X."/>
            <person name="Yoshioka K."/>
            <person name="Yamamoto K.C."/>
        </authorList>
    </citation>
    <scope>INTERACTION WITH DNAJC7</scope>
</reference>
<reference key="14">
    <citation type="journal article" date="2002" name="Mol. Cell. Biol.">
        <title>c-Abl tyrosine kinase regulates the human Rad9 checkpoint protein in response to DNA damage.</title>
        <authorList>
            <person name="Yoshida K."/>
            <person name="Komatsu K."/>
            <person name="Wang H.-G."/>
            <person name="Kufe D."/>
        </authorList>
    </citation>
    <scope>INTERACTION WITH ABL1 AND BCL2L1</scope>
    <scope>PHOSPHORYLATION</scope>
    <scope>PHOSPHORYLATION AT TYR-28</scope>
    <scope>MUTAGENESIS OF TYR-28</scope>
</reference>
<reference key="15">
    <citation type="journal article" date="2003" name="Cancer Res.">
        <title>Expression of mammalian paralogues of HRAD9 and Mrad9 checkpoint control genes in normal and cancerous testicular tissue.</title>
        <authorList>
            <person name="Hopkins K.M."/>
            <person name="Wang X."/>
            <person name="Berlin A."/>
            <person name="Hang H."/>
            <person name="Thaker H.M."/>
            <person name="Lieberman H.B."/>
        </authorList>
    </citation>
    <scope>INTERACTION WITH RAD9B</scope>
</reference>
<reference key="16">
    <citation type="journal article" date="2003" name="EMBO J.">
        <title>Protein kinase Cdelta is responsible for constitutive and DNA damage-induced phosphorylation of Rad9.</title>
        <authorList>
            <person name="Yoshida K."/>
            <person name="Wang H.-G."/>
            <person name="Miki Y."/>
            <person name="Kufe D."/>
        </authorList>
    </citation>
    <scope>PHOSPHORYLATION</scope>
    <scope>SUBCELLULAR LOCATION</scope>
</reference>
<reference key="17">
    <citation type="journal article" date="2003" name="Proc. Natl. Acad. Sci. U.S.A.">
        <title>Loading of the human 9-1-1 checkpoint complex onto DNA by the checkpoint clamp loader hRad17-replication factor C complex in vitro.</title>
        <authorList>
            <person name="Bermudez V.P."/>
            <person name="Lindsey-Boltz L.A."/>
            <person name="Cesare A.J."/>
            <person name="Maniwa Y."/>
            <person name="Griffith J.D."/>
            <person name="Hurwitz J."/>
            <person name="Sancar A."/>
        </authorList>
    </citation>
    <scope>ASSOCIATION OF THE 9-1-1 COMPLEX WITH THE RAD17-RFC COMPLEX</scope>
    <scope>ELECTRON MICROSCOPY OF THE 9-1-1 AND RAD17-RFC COMPLEXES BOUND TO DNA</scope>
</reference>
<reference key="18">
    <citation type="journal article" date="2004" name="Nucleic Acids Res.">
        <title>The human Rad9/Rad1/Hus1 damage sensor clamp interacts with DNA polymerase beta and increases its DNA substrate utilisation efficiency: implications for DNA repair.</title>
        <authorList>
            <person name="Toueille M."/>
            <person name="El-Andaloussi N."/>
            <person name="Frouin I."/>
            <person name="Freire R."/>
            <person name="Funk D."/>
            <person name="Shevelev I."/>
            <person name="Friedrich-Heineken E."/>
            <person name="Villani G."/>
            <person name="Hottiger M.O."/>
            <person name="Huebscher U."/>
        </authorList>
    </citation>
    <scope>IDENTIFICATION IN THE 9-1-1 COMPLEX ASSOCIATED WITH POLB</scope>
</reference>
<reference key="19">
    <citation type="journal article" date="2004" name="Proc. Natl. Acad. Sci. U.S.A.">
        <title>The human Rad9-Rad1-Hus1 checkpoint complex stimulates flap endonuclease 1.</title>
        <authorList>
            <person name="Wang W."/>
            <person name="Brandt P."/>
            <person name="Rossi M.L."/>
            <person name="Lindsey-Boltz L."/>
            <person name="Podust V."/>
            <person name="Fanning E."/>
            <person name="Sancar A."/>
            <person name="Bambara R.A."/>
        </authorList>
    </citation>
    <scope>IDENTIFICATION IN THE 9-1-1 COMPLEX ASSOCIATED WITH FEN1</scope>
</reference>
<reference key="20">
    <citation type="journal article" date="2005" name="Biochem. J.">
        <title>The human checkpoint sensor and alternative DNA clamp Rad9-Rad1-Hus1 modulates the activity of DNA ligase I, a component of the long-patch base excision repair machinery.</title>
        <authorList>
            <person name="Smirnova E."/>
            <person name="Toueille M."/>
            <person name="Markkanen E."/>
            <person name="Huebscher U."/>
        </authorList>
    </citation>
    <scope>IDENTIFICATION IN THE 9-1-1 COMPLEX ASSOCIATED WITH LIG1</scope>
</reference>
<reference key="21">
    <citation type="journal article" date="2005" name="J. Mol. Biol.">
        <title>The two DNA clamps Rad9/Rad1/Hus1 complex and proliferating cell nuclear antigen differentially regulate flap endonuclease 1 activity.</title>
        <authorList>
            <person name="Friedrich-Heineken E."/>
            <person name="Toueille M."/>
            <person name="Taennler B."/>
            <person name="Buerki C."/>
            <person name="Ferrari E."/>
            <person name="Hottiger M.O."/>
            <person name="Huebscher U."/>
        </authorList>
    </citation>
    <scope>IDENTIFICATION IN THE 9-1-1 COMPLEX ASSOCIATED WITH FEN1</scope>
    <scope>INTERACTION WITH FEN1</scope>
</reference>
<reference key="22">
    <citation type="journal article" date="2005" name="Oncogene">
        <title>Interaction and colocalization of Rad9/Rad1/Hus1 checkpoint complex with replication protein A in human cells.</title>
        <authorList>
            <person name="Wu X."/>
            <person name="Shell S.M."/>
            <person name="Zou Y."/>
        </authorList>
    </citation>
    <scope>IDENTIFICATION IN THE 9-1-1 COMPLEX ASSOCIATED WITH RPA1 AND RPA2</scope>
    <scope>INTERACTION WITH RPA1 AND RPA2</scope>
</reference>
<reference key="23">
    <citation type="journal article" date="2006" name="Cell">
        <title>Global, in vivo, and site-specific phosphorylation dynamics in signaling networks.</title>
        <authorList>
            <person name="Olsen J.V."/>
            <person name="Blagoev B."/>
            <person name="Gnad F."/>
            <person name="Macek B."/>
            <person name="Kumar C."/>
            <person name="Mortensen P."/>
            <person name="Mann M."/>
        </authorList>
    </citation>
    <scope>PHOSPHORYLATION [LARGE SCALE ANALYSIS] AT SER-375; SER-380 AND SER-387</scope>
    <scope>IDENTIFICATION BY MASS SPECTROMETRY [LARGE SCALE ANALYSIS]</scope>
    <source>
        <tissue>Cervix carcinoma</tissue>
    </source>
</reference>
<reference key="24">
    <citation type="journal article" date="2007" name="Genes Dev.">
        <title>The Rad9-Hus1-Rad1 (9-1-1) clamp activates checkpoint signaling via TopBP1.</title>
        <authorList>
            <person name="Delacroix S."/>
            <person name="Wagner J.M."/>
            <person name="Kobayashi M."/>
            <person name="Yamamoto K."/>
            <person name="Karnitz L.M."/>
        </authorList>
    </citation>
    <scope>FUNCTION</scope>
    <scope>INTERACTION WITH TOPBP1</scope>
    <scope>PHOSPHORYLATION AT SER-387</scope>
</reference>
<reference key="25">
    <citation type="journal article" date="2008" name="Proc. Natl. Acad. Sci. U.S.A.">
        <title>A quantitative atlas of mitotic phosphorylation.</title>
        <authorList>
            <person name="Dephoure N."/>
            <person name="Zhou C."/>
            <person name="Villen J."/>
            <person name="Beausoleil S.A."/>
            <person name="Bakalarski C.E."/>
            <person name="Elledge S.J."/>
            <person name="Gygi S.P."/>
        </authorList>
    </citation>
    <scope>PHOSPHORYLATION [LARGE SCALE ANALYSIS] AT SER-277 AND SER-387</scope>
    <scope>IDENTIFICATION BY MASS SPECTROMETRY [LARGE SCALE ANALYSIS]</scope>
    <source>
        <tissue>Cervix carcinoma</tissue>
    </source>
</reference>
<reference key="26">
    <citation type="journal article" date="2009" name="Anal. Chem.">
        <title>Lys-N and trypsin cover complementary parts of the phosphoproteome in a refined SCX-based approach.</title>
        <authorList>
            <person name="Gauci S."/>
            <person name="Helbig A.O."/>
            <person name="Slijper M."/>
            <person name="Krijgsveld J."/>
            <person name="Heck A.J."/>
            <person name="Mohammed S."/>
        </authorList>
    </citation>
    <scope>IDENTIFICATION BY MASS SPECTROMETRY [LARGE SCALE ANALYSIS]</scope>
</reference>
<reference key="27">
    <citation type="journal article" date="2009" name="Sci. Signal.">
        <title>Quantitative phosphoproteomic analysis of T cell receptor signaling reveals system-wide modulation of protein-protein interactions.</title>
        <authorList>
            <person name="Mayya V."/>
            <person name="Lundgren D.H."/>
            <person name="Hwang S.-I."/>
            <person name="Rezaul K."/>
            <person name="Wu L."/>
            <person name="Eng J.K."/>
            <person name="Rodionov V."/>
            <person name="Han D.K."/>
        </authorList>
    </citation>
    <scope>PHOSPHORYLATION [LARGE SCALE ANALYSIS] AT SER-277; SER-375 AND SER-387</scope>
    <scope>IDENTIFICATION BY MASS SPECTROMETRY [LARGE SCALE ANALYSIS]</scope>
    <source>
        <tissue>Leukemic T-cell</tissue>
    </source>
</reference>
<reference key="28">
    <citation type="journal article" date="2010" name="Genes Cells">
        <title>Casein kinase 2-dependent phosphorylation of human Rad9 mediates the interaction between human Rad9-Hus1-Rad1 complex and TopBP1.</title>
        <authorList>
            <person name="Takeishi Y."/>
            <person name="Ohashi E."/>
            <person name="Ogawa K."/>
            <person name="Masai H."/>
            <person name="Obuse C."/>
            <person name="Tsurimoto T."/>
        </authorList>
    </citation>
    <scope>FUNCTION</scope>
    <scope>INTERACTION WITH TOPBP1</scope>
    <scope>PHOSPHORYLATION AT SER-341 AND SER-387</scope>
    <scope>MUTAGENESIS OF SER-341 AND SER-387</scope>
</reference>
<reference key="29">
    <citation type="journal article" date="2010" name="Sci. Signal.">
        <title>Quantitative phosphoproteomics reveals widespread full phosphorylation site occupancy during mitosis.</title>
        <authorList>
            <person name="Olsen J.V."/>
            <person name="Vermeulen M."/>
            <person name="Santamaria A."/>
            <person name="Kumar C."/>
            <person name="Miller M.L."/>
            <person name="Jensen L.J."/>
            <person name="Gnad F."/>
            <person name="Cox J."/>
            <person name="Jensen T.S."/>
            <person name="Nigg E.A."/>
            <person name="Brunak S."/>
            <person name="Mann M."/>
        </authorList>
    </citation>
    <scope>PHOSPHORYLATION [LARGE SCALE ANALYSIS] AT SER-277; SER-375 AND SER-387</scope>
    <scope>IDENTIFICATION BY MASS SPECTROMETRY [LARGE SCALE ANALYSIS]</scope>
    <source>
        <tissue>Cervix carcinoma</tissue>
    </source>
</reference>
<reference key="30">
    <citation type="journal article" date="2011" name="BMC Syst. Biol.">
        <title>Initial characterization of the human central proteome.</title>
        <authorList>
            <person name="Burkard T.R."/>
            <person name="Planyavsky M."/>
            <person name="Kaupe I."/>
            <person name="Breitwieser F.P."/>
            <person name="Buerckstuemmer T."/>
            <person name="Bennett K.L."/>
            <person name="Superti-Furga G."/>
            <person name="Colinge J."/>
        </authorList>
    </citation>
    <scope>IDENTIFICATION BY MASS SPECTROMETRY [LARGE SCALE ANALYSIS]</scope>
</reference>
<reference key="31">
    <citation type="journal article" date="2011" name="Sci. Signal.">
        <title>System-wide temporal characterization of the proteome and phosphoproteome of human embryonic stem cell differentiation.</title>
        <authorList>
            <person name="Rigbolt K.T."/>
            <person name="Prokhorova T.A."/>
            <person name="Akimov V."/>
            <person name="Henningsen J."/>
            <person name="Johansen P.T."/>
            <person name="Kratchmarova I."/>
            <person name="Kassem M."/>
            <person name="Mann M."/>
            <person name="Olsen J.V."/>
            <person name="Blagoev B."/>
        </authorList>
    </citation>
    <scope>PHOSPHORYLATION [LARGE SCALE ANALYSIS] AT SER-387</scope>
    <scope>IDENTIFICATION BY MASS SPECTROMETRY [LARGE SCALE ANALYSIS]</scope>
</reference>
<reference key="32">
    <citation type="journal article" date="2011" name="Science">
        <title>A DNA damage response screen identifies RHINO, a 9-1-1 and TopBP1 interacting protein required for ATR signaling.</title>
        <authorList>
            <person name="Cotta-Ramusino C."/>
            <person name="McDonald E.R. III"/>
            <person name="Hurov K."/>
            <person name="Sowa M.E."/>
            <person name="Harper J.W."/>
            <person name="Elledge S.J."/>
        </authorList>
    </citation>
    <scope>FUNCTION</scope>
    <scope>IDENTIFICATION BY MASS SPECTROMETRY</scope>
</reference>
<reference key="33">
    <citation type="journal article" date="2013" name="J. Proteome Res.">
        <title>Toward a comprehensive characterization of a human cancer cell phosphoproteome.</title>
        <authorList>
            <person name="Zhou H."/>
            <person name="Di Palma S."/>
            <person name="Preisinger C."/>
            <person name="Peng M."/>
            <person name="Polat A.N."/>
            <person name="Heck A.J."/>
            <person name="Mohammed S."/>
        </authorList>
    </citation>
    <scope>PHOSPHORYLATION [LARGE SCALE ANALYSIS] AT SER-328 AND SER-387</scope>
    <scope>IDENTIFICATION BY MASS SPECTROMETRY [LARGE SCALE ANALYSIS]</scope>
    <source>
        <tissue>Cervix carcinoma</tissue>
        <tissue>Erythroleukemia</tissue>
    </source>
</reference>
<reference key="34">
    <citation type="journal article" date="2014" name="J. Proteomics">
        <title>An enzyme assisted RP-RPLC approach for in-depth analysis of human liver phosphoproteome.</title>
        <authorList>
            <person name="Bian Y."/>
            <person name="Song C."/>
            <person name="Cheng K."/>
            <person name="Dong M."/>
            <person name="Wang F."/>
            <person name="Huang J."/>
            <person name="Sun D."/>
            <person name="Wang L."/>
            <person name="Ye M."/>
            <person name="Zou H."/>
        </authorList>
    </citation>
    <scope>IDENTIFICATION BY MASS SPECTROMETRY [LARGE SCALE ANALYSIS]</scope>
    <source>
        <tissue>Liver</tissue>
    </source>
</reference>
<reference key="35">
    <citation type="journal article" date="2019" name="Elife">
        <title>Phosphorylation-mediated interactions with TOPBP1 couple 53BP1 and 9-1-1 to control the G1 DNA damage checkpoint.</title>
        <authorList>
            <person name="Bigot N."/>
            <person name="Day M."/>
            <person name="Baldock R.A."/>
            <person name="Watts F.Z."/>
            <person name="Oliver A.W."/>
            <person name="Pearl L.H."/>
        </authorList>
    </citation>
    <scope>FUNCTION</scope>
    <scope>INTERACTION WITH TOPBP1</scope>
</reference>
<reference evidence="24" key="36">
    <citation type="journal article" date="2020" name="J. Biol. Chem.">
        <title>Structure of the RAD9-RAD1-HUS1 checkpoint clamp bound to RHINO sheds light on the other side of the DNA clamp.</title>
        <authorList>
            <person name="Hara K."/>
            <person name="Iida N."/>
            <person name="Tamafune R."/>
            <person name="Ohashi E."/>
            <person name="Sakurai H."/>
            <person name="Ishikawa Y."/>
            <person name="Hishiki A."/>
            <person name="Hashimoto H."/>
        </authorList>
    </citation>
    <scope>X-RAY CRYSTALLOGRAPHY (2.40 ANGSTROMS) OF 1-270 IN COMPLEX WITH RHNO1; RAD1 AND HUS1</scope>
    <scope>IDENTIFICATION IN THE 9-1-1 COMPLEX</scope>
</reference>
<reference evidence="25" key="37">
    <citation type="journal article" date="2023" name="J. Biol. Chem.">
        <title>The 9-1-1 DNA clamp subunit RAD1 forms specific interactions with clamp loader RAD17, revealing functional implications for binding-protein RHINO.</title>
        <authorList>
            <person name="Hara K."/>
            <person name="Hishiki A."/>
            <person name="Hoshino T."/>
            <person name="Nagata K."/>
            <person name="Iida N."/>
            <person name="Sawada Y."/>
            <person name="Ohashi E."/>
            <person name="Hashimoto H."/>
        </authorList>
    </citation>
    <scope>X-RAY CRYSTALLOGRAPHY (2.12 ANGSTROMS) OF 1-270 IN COMPLEX WITH RAD17; RAD1 AND HUS1</scope>
</reference>
<proteinExistence type="evidence at protein level"/>
<organism>
    <name type="scientific">Homo sapiens</name>
    <name type="common">Human</name>
    <dbReference type="NCBI Taxonomy" id="9606"/>
    <lineage>
        <taxon>Eukaryota</taxon>
        <taxon>Metazoa</taxon>
        <taxon>Chordata</taxon>
        <taxon>Craniata</taxon>
        <taxon>Vertebrata</taxon>
        <taxon>Euteleostomi</taxon>
        <taxon>Mammalia</taxon>
        <taxon>Eutheria</taxon>
        <taxon>Euarchontoglires</taxon>
        <taxon>Primates</taxon>
        <taxon>Haplorrhini</taxon>
        <taxon>Catarrhini</taxon>
        <taxon>Hominidae</taxon>
        <taxon>Homo</taxon>
    </lineage>
</organism>